<organism>
    <name type="scientific">Pseudomonas aeruginosa (strain ATCC 15692 / DSM 22644 / CIP 104116 / JCM 14847 / LMG 12228 / 1C / PRS 101 / PAO1)</name>
    <dbReference type="NCBI Taxonomy" id="208964"/>
    <lineage>
        <taxon>Bacteria</taxon>
        <taxon>Pseudomonadati</taxon>
        <taxon>Pseudomonadota</taxon>
        <taxon>Gammaproteobacteria</taxon>
        <taxon>Pseudomonadales</taxon>
        <taxon>Pseudomonadaceae</taxon>
        <taxon>Pseudomonas</taxon>
    </lineage>
</organism>
<comment type="function">
    <text evidence="1 2 3">ATPase that plays an important role in maintaining flagellar number in Pseudomonas aeruginosa (PubMed:10629180, PubMed:28065505). Exhibits anti-activator activity against FleQ, the global transcriptional regulator of flagellar genes (PubMed:22581773, PubMed:28065505).</text>
</comment>
<comment type="activity regulation">
    <text evidence="3">ATP-binding allows dimerization and subsequent antagonistic effect against FleQ.</text>
</comment>
<comment type="subunit">
    <text evidence="2 3">Forms homodimers (PubMed:28065505). Interacts with FleQ (PubMed:22581773).</text>
</comment>
<comment type="disruption phenotype">
    <text evidence="1">Deletion results in up-regulation of flagellar genes that code for structural and regulatory proteins, leading to the multi-flagellated phenotype, which shows motility defect.</text>
</comment>
<comment type="similarity">
    <text evidence="5">Belongs to the ParA family.</text>
</comment>
<gene>
    <name evidence="4" type="primary">fleN</name>
    <name type="ordered locus">PA1454</name>
</gene>
<proteinExistence type="evidence at protein level"/>
<protein>
    <recommendedName>
        <fullName evidence="4">Antiactivator FleN</fullName>
    </recommendedName>
</protein>
<sequence length="280" mass="30037">MKQMGSMHPVQVIAVTGGKGGVGKTNVSVNLALALADLGRRVMLLDADLGLANVDVLLGLTPKRTLADVIEGRCELRDVLLLGPGGVRIVPAASGTQSMVHLSPMQHAGLIQAFSDISDNLDVLVVDTAAGIGDSVVSFVRAAQEVLLVVCDEPTSITDAYALIKLLNRDHGMTRFRVLANMAHSPQEGRNLFAKLTKVTDRFLDVALQYVGVIPYDESVRKAVQKQRAVYEAFPRSKASLAFKAVAQKVDSWPLPANPRGHLEFFVERLVQHPATGSAV</sequence>
<name>FLEN_PSEAE</name>
<accession>G3XD64</accession>
<evidence type="ECO:0000269" key="1">
    <source>
    </source>
</evidence>
<evidence type="ECO:0000269" key="2">
    <source>
    </source>
</evidence>
<evidence type="ECO:0000269" key="3">
    <source>
    </source>
</evidence>
<evidence type="ECO:0000303" key="4">
    <source>
    </source>
</evidence>
<evidence type="ECO:0000305" key="5"/>
<evidence type="ECO:0000305" key="6">
    <source>
    </source>
</evidence>
<evidence type="ECO:0007744" key="7">
    <source>
        <dbReference type="PDB" id="5J1J"/>
    </source>
</evidence>
<evidence type="ECO:0007744" key="8">
    <source>
        <dbReference type="PDB" id="5JVF"/>
    </source>
</evidence>
<evidence type="ECO:0007829" key="9">
    <source>
        <dbReference type="PDB" id="5J1J"/>
    </source>
</evidence>
<evidence type="ECO:0007829" key="10">
    <source>
        <dbReference type="PDB" id="5JVF"/>
    </source>
</evidence>
<keyword id="KW-0002">3D-structure</keyword>
<keyword id="KW-0067">ATP-binding</keyword>
<keyword id="KW-0547">Nucleotide-binding</keyword>
<keyword id="KW-1185">Reference proteome</keyword>
<feature type="chain" id="PRO_0000448539" description="Antiactivator FleN">
    <location>
        <begin position="1"/>
        <end position="280"/>
    </location>
</feature>
<feature type="binding site" evidence="6 7">
    <location>
        <begin position="19"/>
        <end position="26"/>
    </location>
    <ligand>
        <name>ATP</name>
        <dbReference type="ChEBI" id="CHEBI:30616"/>
    </ligand>
</feature>
<feature type="binding site" evidence="6 7">
    <location>
        <position position="153"/>
    </location>
    <ligand>
        <name>ATP</name>
        <dbReference type="ChEBI" id="CHEBI:30616"/>
    </ligand>
</feature>
<feature type="binding site" evidence="6 7">
    <location>
        <position position="181"/>
    </location>
    <ligand>
        <name>ATP</name>
        <dbReference type="ChEBI" id="CHEBI:30616"/>
    </ligand>
</feature>
<feature type="binding site" evidence="6 7">
    <location>
        <begin position="215"/>
        <end position="217"/>
    </location>
    <ligand>
        <name>ATP</name>
        <dbReference type="ChEBI" id="CHEBI:30616"/>
    </ligand>
</feature>
<feature type="binding site" evidence="6 7">
    <location>
        <position position="221"/>
    </location>
    <ligand>
        <name>ATP</name>
        <dbReference type="ChEBI" id="CHEBI:30616"/>
    </ligand>
</feature>
<feature type="strand" evidence="9">
    <location>
        <begin position="11"/>
        <end position="16"/>
    </location>
</feature>
<feature type="helix" evidence="9">
    <location>
        <begin position="24"/>
        <end position="37"/>
    </location>
</feature>
<feature type="strand" evidence="9">
    <location>
        <begin position="42"/>
        <end position="47"/>
    </location>
</feature>
<feature type="helix" evidence="9">
    <location>
        <begin position="54"/>
        <end position="58"/>
    </location>
</feature>
<feature type="helix" evidence="9">
    <location>
        <begin position="66"/>
        <end position="70"/>
    </location>
</feature>
<feature type="helix" evidence="9">
    <location>
        <begin position="76"/>
        <end position="79"/>
    </location>
</feature>
<feature type="helix" evidence="9">
    <location>
        <begin position="84"/>
        <end position="86"/>
    </location>
</feature>
<feature type="strand" evidence="9">
    <location>
        <begin position="88"/>
        <end position="90"/>
    </location>
</feature>
<feature type="turn" evidence="9">
    <location>
        <begin position="98"/>
        <end position="101"/>
    </location>
</feature>
<feature type="helix" evidence="9">
    <location>
        <begin position="104"/>
        <end position="113"/>
    </location>
</feature>
<feature type="helix" evidence="9">
    <location>
        <begin position="114"/>
        <end position="117"/>
    </location>
</feature>
<feature type="strand" evidence="9">
    <location>
        <begin position="122"/>
        <end position="128"/>
    </location>
</feature>
<feature type="strand" evidence="9">
    <location>
        <begin position="130"/>
        <end position="132"/>
    </location>
</feature>
<feature type="helix" evidence="9">
    <location>
        <begin position="134"/>
        <end position="142"/>
    </location>
</feature>
<feature type="strand" evidence="9">
    <location>
        <begin position="143"/>
        <end position="150"/>
    </location>
</feature>
<feature type="helix" evidence="9">
    <location>
        <begin position="154"/>
        <end position="171"/>
    </location>
</feature>
<feature type="strand" evidence="9">
    <location>
        <begin position="175"/>
        <end position="183"/>
    </location>
</feature>
<feature type="helix" evidence="9">
    <location>
        <begin position="188"/>
        <end position="203"/>
    </location>
</feature>
<feature type="strand" evidence="9">
    <location>
        <begin position="207"/>
        <end position="215"/>
    </location>
</feature>
<feature type="helix" evidence="9">
    <location>
        <begin position="218"/>
        <end position="226"/>
    </location>
</feature>
<feature type="helix" evidence="9">
    <location>
        <begin position="230"/>
        <end position="233"/>
    </location>
</feature>
<feature type="helix" evidence="9">
    <location>
        <begin position="238"/>
        <end position="252"/>
    </location>
</feature>
<feature type="helix" evidence="10">
    <location>
        <begin position="264"/>
        <end position="271"/>
    </location>
</feature>
<feature type="strand" evidence="9">
    <location>
        <begin position="274"/>
        <end position="276"/>
    </location>
</feature>
<reference key="1">
    <citation type="journal article" date="2000" name="Nature">
        <title>Complete genome sequence of Pseudomonas aeruginosa PAO1, an opportunistic pathogen.</title>
        <authorList>
            <person name="Stover C.K."/>
            <person name="Pham X.-Q.T."/>
            <person name="Erwin A.L."/>
            <person name="Mizoguchi S.D."/>
            <person name="Warrener P."/>
            <person name="Hickey M.J."/>
            <person name="Brinkman F.S.L."/>
            <person name="Hufnagle W.O."/>
            <person name="Kowalik D.J."/>
            <person name="Lagrou M."/>
            <person name="Garber R.L."/>
            <person name="Goltry L."/>
            <person name="Tolentino E."/>
            <person name="Westbrock-Wadman S."/>
            <person name="Yuan Y."/>
            <person name="Brody L.L."/>
            <person name="Coulter S.N."/>
            <person name="Folger K.R."/>
            <person name="Kas A."/>
            <person name="Larbig K."/>
            <person name="Lim R.M."/>
            <person name="Smith K.A."/>
            <person name="Spencer D.H."/>
            <person name="Wong G.K.-S."/>
            <person name="Wu Z."/>
            <person name="Paulsen I.T."/>
            <person name="Reizer J."/>
            <person name="Saier M.H. Jr."/>
            <person name="Hancock R.E.W."/>
            <person name="Lory S."/>
            <person name="Olson M.V."/>
        </authorList>
    </citation>
    <scope>NUCLEOTIDE SEQUENCE [LARGE SCALE GENOMIC DNA]</scope>
    <source>
        <strain>ATCC 15692 / DSM 22644 / CIP 104116 / JCM 14847 / LMG 12228 / 1C / PRS 101 / PAO1</strain>
    </source>
</reference>
<reference key="2">
    <citation type="journal article" date="2000" name="J. Bacteriol.">
        <title>fleN, a gene that regulates flagellar number in Pseudomonas aeruginosa.</title>
        <authorList>
            <person name="Dasgupta N."/>
            <person name="Arora S.K."/>
            <person name="Ramphal R."/>
        </authorList>
    </citation>
    <scope>FUNCTION</scope>
    <scope>DISRUPTION PHENOTYPE</scope>
</reference>
<reference key="3">
    <citation type="journal article" date="2012" name="Nucleic Acids Res.">
        <title>The FleQ protein from Pseudomonas aeruginosa functions as both a repressor and an activator to control gene expression from the pel operon promoter in response to c-di-GMP.</title>
        <authorList>
            <person name="Baraquet C."/>
            <person name="Murakami K."/>
            <person name="Parsek M.R."/>
            <person name="Harwood C.S."/>
        </authorList>
    </citation>
    <scope>FUNCTION</scope>
    <scope>INTERACTION WITH FLEQ</scope>
</reference>
<reference evidence="7 8" key="4">
    <citation type="journal article" date="2017" name="Structure">
        <title>ATP-Induced Structural Remodeling in the Antiactivator FleN Enables Formation of the Functional Dimeric Form.</title>
        <authorList>
            <person name="Chanchal X."/>
            <person name="Banerjee P."/>
            <person name="Jain D."/>
        </authorList>
    </citation>
    <scope>X-RAY CRYSTALLOGRAPHY (1.55 ANGSTROMS) IN COMPLEX WITH ATP ANALOG</scope>
    <scope>SUBUNIT</scope>
    <scope>ACTIVITY REGULATION</scope>
    <scope>FUNCTION</scope>
</reference>
<dbReference type="EMBL" id="AE004091">
    <property type="protein sequence ID" value="AAG04843.1"/>
    <property type="molecule type" value="Genomic_DNA"/>
</dbReference>
<dbReference type="PIR" id="B83463">
    <property type="entry name" value="B83463"/>
</dbReference>
<dbReference type="RefSeq" id="NP_250145.1">
    <property type="nucleotide sequence ID" value="NC_002516.2"/>
</dbReference>
<dbReference type="RefSeq" id="WP_003083064.1">
    <property type="nucleotide sequence ID" value="NZ_QZGE01000005.1"/>
</dbReference>
<dbReference type="PDB" id="5J1J">
    <property type="method" value="X-ray"/>
    <property type="resolution" value="1.55 A"/>
    <property type="chains" value="A/B=1-280"/>
</dbReference>
<dbReference type="PDB" id="5JVF">
    <property type="method" value="X-ray"/>
    <property type="resolution" value="1.66 A"/>
    <property type="chains" value="A=1-280"/>
</dbReference>
<dbReference type="PDB" id="7EJW">
    <property type="method" value="X-ray"/>
    <property type="resolution" value="1.98 A"/>
    <property type="chains" value="A/B=1-280"/>
</dbReference>
<dbReference type="PDB" id="8P53">
    <property type="method" value="EM"/>
    <property type="resolution" value="2.70 A"/>
    <property type="chains" value="A/B=2-280"/>
</dbReference>
<dbReference type="PDB" id="8PB9">
    <property type="method" value="EM"/>
    <property type="resolution" value="3.30 A"/>
    <property type="chains" value="A/B=2-280"/>
</dbReference>
<dbReference type="PDBsum" id="5J1J"/>
<dbReference type="PDBsum" id="5JVF"/>
<dbReference type="PDBsum" id="7EJW"/>
<dbReference type="PDBsum" id="8P53"/>
<dbReference type="PDBsum" id="8PB9"/>
<dbReference type="EMDB" id="EMD-17445"/>
<dbReference type="EMDB" id="EMD-17581"/>
<dbReference type="SMR" id="G3XD64"/>
<dbReference type="STRING" id="208964.PA1454"/>
<dbReference type="PaxDb" id="208964-PA1454"/>
<dbReference type="GeneID" id="77221925"/>
<dbReference type="GeneID" id="881866"/>
<dbReference type="KEGG" id="pae:PA1454"/>
<dbReference type="PATRIC" id="fig|208964.12.peg.1505"/>
<dbReference type="PseudoCAP" id="PA1454"/>
<dbReference type="HOGENOM" id="CLU_037612_0_0_6"/>
<dbReference type="InParanoid" id="G3XD64"/>
<dbReference type="OrthoDB" id="9816297at2"/>
<dbReference type="PhylomeDB" id="G3XD64"/>
<dbReference type="BioCyc" id="PAER208964:G1FZ6-1480-MONOMER"/>
<dbReference type="Proteomes" id="UP000002438">
    <property type="component" value="Chromosome"/>
</dbReference>
<dbReference type="GO" id="GO:0009898">
    <property type="term" value="C:cytoplasmic side of plasma membrane"/>
    <property type="evidence" value="ECO:0000318"/>
    <property type="project" value="GO_Central"/>
</dbReference>
<dbReference type="GO" id="GO:0005829">
    <property type="term" value="C:cytosol"/>
    <property type="evidence" value="ECO:0000318"/>
    <property type="project" value="GO_Central"/>
</dbReference>
<dbReference type="GO" id="GO:0005524">
    <property type="term" value="F:ATP binding"/>
    <property type="evidence" value="ECO:0000314"/>
    <property type="project" value="PseudoCAP"/>
</dbReference>
<dbReference type="GO" id="GO:0016887">
    <property type="term" value="F:ATP hydrolysis activity"/>
    <property type="evidence" value="ECO:0000318"/>
    <property type="project" value="GO_Central"/>
</dbReference>
<dbReference type="CDD" id="cd02038">
    <property type="entry name" value="FlhG-like"/>
    <property type="match status" value="1"/>
</dbReference>
<dbReference type="FunFam" id="3.40.50.300:FF:000158">
    <property type="entry name" value="Site-determining protein"/>
    <property type="match status" value="1"/>
</dbReference>
<dbReference type="Gene3D" id="3.40.50.300">
    <property type="entry name" value="P-loop containing nucleotide triphosphate hydrolases"/>
    <property type="match status" value="1"/>
</dbReference>
<dbReference type="InterPro" id="IPR033875">
    <property type="entry name" value="FlhG"/>
</dbReference>
<dbReference type="InterPro" id="IPR025501">
    <property type="entry name" value="MinD_FleN"/>
</dbReference>
<dbReference type="InterPro" id="IPR027417">
    <property type="entry name" value="P-loop_NTPase"/>
</dbReference>
<dbReference type="InterPro" id="IPR050625">
    <property type="entry name" value="ParA/MinD_ATPase"/>
</dbReference>
<dbReference type="InterPro" id="IPR033756">
    <property type="entry name" value="YlxH/NBP35"/>
</dbReference>
<dbReference type="PANTHER" id="PTHR43384:SF4">
    <property type="entry name" value="CELLULOSE BIOSYNTHESIS PROTEIN BCSQ-RELATED"/>
    <property type="match status" value="1"/>
</dbReference>
<dbReference type="PANTHER" id="PTHR43384">
    <property type="entry name" value="SEPTUM SITE-DETERMINING PROTEIN MIND HOMOLOG, CHLOROPLASTIC-RELATED"/>
    <property type="match status" value="1"/>
</dbReference>
<dbReference type="Pfam" id="PF10609">
    <property type="entry name" value="ParA"/>
    <property type="match status" value="1"/>
</dbReference>
<dbReference type="PIRSF" id="PIRSF003092">
    <property type="entry name" value="MinD"/>
    <property type="match status" value="1"/>
</dbReference>
<dbReference type="SUPFAM" id="SSF52540">
    <property type="entry name" value="P-loop containing nucleoside triphosphate hydrolases"/>
    <property type="match status" value="1"/>
</dbReference>